<gene>
    <name evidence="7" type="primary">11</name>
</gene>
<evidence type="ECO:0000255" key="1"/>
<evidence type="ECO:0000256" key="2">
    <source>
        <dbReference type="SAM" id="MobiDB-lite"/>
    </source>
</evidence>
<evidence type="ECO:0000269" key="3">
    <source>
    </source>
</evidence>
<evidence type="ECO:0000269" key="4">
    <source>
    </source>
</evidence>
<evidence type="ECO:0000305" key="5"/>
<evidence type="ECO:0000305" key="6">
    <source>
    </source>
</evidence>
<evidence type="ECO:0000312" key="7">
    <source>
        <dbReference type="EMBL" id="CAA61868.1"/>
    </source>
</evidence>
<organism evidence="7">
    <name type="scientific">Bacillus phage SPP1</name>
    <name type="common">Bacteriophage SPP1</name>
    <dbReference type="NCBI Taxonomy" id="10724"/>
    <lineage>
        <taxon>Viruses</taxon>
        <taxon>Duplodnaviria</taxon>
        <taxon>Heunggongvirae</taxon>
        <taxon>Uroviricota</taxon>
        <taxon>Caudoviricetes</taxon>
    </lineage>
</organism>
<organismHost>
    <name type="scientific">Bacillus subtilis</name>
    <dbReference type="NCBI Taxonomy" id="1423"/>
</organismHost>
<sequence>MSLKEQLGEELYGQVLAKLGEGAKLVDISDGSFIPKEKFDAVNSEKKSLEQQLTDRDQQLQELSTKATGHDELSAKIADLQKANEEAKQAFEAEKQQLKYEHALETALRDSGAKNPKAVKALLDTESIKLDGDKLLGFEDQIKALKEQEDYLFKGTEPNGGVQGTPPPGKGADLGGLPTKKNPFKQGPDFNLTEQGILFRENPELAKKLQAEAQ</sequence>
<reference key="1">
    <citation type="journal article" date="1997" name="Gene">
        <title>The complete nucleotide sequence and functional organization of Bacillus subtilis bacteriophage SPP1.</title>
        <authorList>
            <person name="Alonso J.C."/>
            <person name="Luder G."/>
            <person name="Stiege A.C."/>
            <person name="Chai S."/>
            <person name="Weise F."/>
            <person name="Trautner T.A."/>
        </authorList>
    </citation>
    <scope>NUCLEOTIDE SEQUENCE [LARGE SCALE GENOMIC DNA]</scope>
</reference>
<reference key="2">
    <citation type="journal article" date="1997" name="J. Mol. Biol.">
        <title>Head morphogenesis genes of the Bacillus subtilis bacteriophage SPP1.</title>
        <authorList>
            <person name="Becker B."/>
            <person name="de la Fuente N."/>
            <person name="Gassel M."/>
            <person name="Guenther D."/>
            <person name="Tavares P."/>
            <person name="Lurz R."/>
            <person name="Trautner T.A."/>
            <person name="Alonso J.C."/>
        </authorList>
    </citation>
    <scope>NUCLEOTIDE SEQUENCE [GENOMIC DNA]</scope>
    <scope>IDENTIFICATION</scope>
</reference>
<reference key="3">
    <citation type="journal article" date="2000" name="J. Mol. Biol.">
        <title>Shape and DNA packaging activity of bacteriophage SPP1 procapsid: protein components and interactions during assembly.</title>
        <authorList>
            <person name="Droege A."/>
            <person name="Santos M.A."/>
            <person name="Stiege A.C."/>
            <person name="Alonso J.C."/>
            <person name="Lurz R."/>
            <person name="Trautner T.A."/>
            <person name="Tavares P."/>
        </authorList>
    </citation>
    <scope>INTERACTION WITH THE CAPSID PROTEIN GP13</scope>
</reference>
<reference key="4">
    <citation type="journal article" date="2008" name="J. Mol. Biol.">
        <title>Oligomerization of the SPP1 scaffolding protein.</title>
        <authorList>
            <person name="Poh S.L."/>
            <person name="el Khadali F."/>
            <person name="Berrier C."/>
            <person name="Lurz R."/>
            <person name="Melki R."/>
            <person name="Tavares P."/>
        </authorList>
    </citation>
    <scope>SUBUNIT</scope>
    <scope>FUNCTION</scope>
</reference>
<comment type="function">
    <text evidence="6">Scaffolding protein involved in the icosahedric procapsid assembly. Coassembles with the capsid proteins to form the procapsid, in which the scaffolding protein is found within the external shell of icosahedrally arranged capsid protein subunits (PubMed:18377930). In a subsequent step the scaffolding protein molecules are released from the procapsid (Probable).</text>
</comment>
<comment type="subunit">
    <text evidence="3 4">Homodimer (PubMed:10656821). Interacts with the capsid protein gp13 (PubMed:18377930).</text>
</comment>
<comment type="similarity">
    <text evidence="5">Belongs to the SPP1-like scaffolding protein family.</text>
</comment>
<keyword id="KW-0175">Coiled coil</keyword>
<keyword id="KW-1185">Reference proteome</keyword>
<keyword id="KW-0118">Viral capsid assembly</keyword>
<keyword id="KW-1188">Viral release from host cell</keyword>
<accession>Q38580</accession>
<protein>
    <recommendedName>
        <fullName evidence="5">Capsid assembly scaffolding protein</fullName>
    </recommendedName>
    <alternativeName>
        <fullName>Gene product 11</fullName>
        <shortName>Gp11</shortName>
    </alternativeName>
    <alternativeName>
        <fullName evidence="5">Head morphogenesis protein</fullName>
    </alternativeName>
    <alternativeName>
        <fullName evidence="5">Scaffold protein</fullName>
    </alternativeName>
</protein>
<feature type="chain" id="PRO_0000433209" description="Capsid assembly scaffolding protein">
    <location>
        <begin position="1"/>
        <end position="214"/>
    </location>
</feature>
<feature type="region of interest" description="Disordered" evidence="2">
    <location>
        <begin position="154"/>
        <end position="190"/>
    </location>
</feature>
<feature type="coiled-coil region" evidence="1">
    <location>
        <begin position="36"/>
        <end position="105"/>
    </location>
</feature>
<dbReference type="EMBL" id="X89721">
    <property type="protein sequence ID" value="CAA61868.1"/>
    <property type="molecule type" value="Genomic_DNA"/>
</dbReference>
<dbReference type="EMBL" id="X97918">
    <property type="protein sequence ID" value="CAA66589.1"/>
    <property type="molecule type" value="Genomic_DNA"/>
</dbReference>
<dbReference type="PIR" id="S58140">
    <property type="entry name" value="S58140"/>
</dbReference>
<dbReference type="RefSeq" id="NP_690671.1">
    <property type="nucleotide sequence ID" value="NC_004166.2"/>
</dbReference>
<dbReference type="SMR" id="Q38580"/>
<dbReference type="KEGG" id="vg:955293"/>
<dbReference type="OrthoDB" id="570at186765"/>
<dbReference type="Proteomes" id="UP000002559">
    <property type="component" value="Genome"/>
</dbReference>
<dbReference type="GO" id="GO:0019069">
    <property type="term" value="P:viral capsid assembly"/>
    <property type="evidence" value="ECO:0000314"/>
    <property type="project" value="UniProtKB"/>
</dbReference>
<dbReference type="InterPro" id="IPR009636">
    <property type="entry name" value="SCAF"/>
</dbReference>
<dbReference type="Pfam" id="PF06810">
    <property type="entry name" value="Phage_scaffold"/>
    <property type="match status" value="1"/>
</dbReference>
<proteinExistence type="evidence at protein level"/>
<name>SCAF_BPSPP</name>